<dbReference type="EC" id="4.2.3.4" evidence="1"/>
<dbReference type="EMBL" id="BA000012">
    <property type="protein sequence ID" value="BAB50435.1"/>
    <property type="molecule type" value="Genomic_DNA"/>
</dbReference>
<dbReference type="RefSeq" id="WP_010911781.1">
    <property type="nucleotide sequence ID" value="NC_002678.2"/>
</dbReference>
<dbReference type="SMR" id="Q98FY1"/>
<dbReference type="KEGG" id="mlo:mll3571"/>
<dbReference type="PATRIC" id="fig|266835.9.peg.2846"/>
<dbReference type="eggNOG" id="COG0337">
    <property type="taxonomic scope" value="Bacteria"/>
</dbReference>
<dbReference type="HOGENOM" id="CLU_001201_0_2_5"/>
<dbReference type="UniPathway" id="UPA00053">
    <property type="reaction ID" value="UER00085"/>
</dbReference>
<dbReference type="Proteomes" id="UP000000552">
    <property type="component" value="Chromosome"/>
</dbReference>
<dbReference type="GO" id="GO:0005737">
    <property type="term" value="C:cytoplasm"/>
    <property type="evidence" value="ECO:0007669"/>
    <property type="project" value="UniProtKB-SubCell"/>
</dbReference>
<dbReference type="GO" id="GO:0003856">
    <property type="term" value="F:3-dehydroquinate synthase activity"/>
    <property type="evidence" value="ECO:0007669"/>
    <property type="project" value="UniProtKB-UniRule"/>
</dbReference>
<dbReference type="GO" id="GO:0046872">
    <property type="term" value="F:metal ion binding"/>
    <property type="evidence" value="ECO:0007669"/>
    <property type="project" value="UniProtKB-KW"/>
</dbReference>
<dbReference type="GO" id="GO:0000166">
    <property type="term" value="F:nucleotide binding"/>
    <property type="evidence" value="ECO:0007669"/>
    <property type="project" value="UniProtKB-KW"/>
</dbReference>
<dbReference type="GO" id="GO:0008652">
    <property type="term" value="P:amino acid biosynthetic process"/>
    <property type="evidence" value="ECO:0007669"/>
    <property type="project" value="UniProtKB-KW"/>
</dbReference>
<dbReference type="GO" id="GO:0009073">
    <property type="term" value="P:aromatic amino acid family biosynthetic process"/>
    <property type="evidence" value="ECO:0007669"/>
    <property type="project" value="UniProtKB-KW"/>
</dbReference>
<dbReference type="GO" id="GO:0009423">
    <property type="term" value="P:chorismate biosynthetic process"/>
    <property type="evidence" value="ECO:0007669"/>
    <property type="project" value="UniProtKB-UniRule"/>
</dbReference>
<dbReference type="CDD" id="cd08195">
    <property type="entry name" value="DHQS"/>
    <property type="match status" value="1"/>
</dbReference>
<dbReference type="FunFam" id="3.40.50.1970:FF:000007">
    <property type="entry name" value="Pentafunctional AROM polypeptide"/>
    <property type="match status" value="1"/>
</dbReference>
<dbReference type="Gene3D" id="3.40.50.1970">
    <property type="match status" value="1"/>
</dbReference>
<dbReference type="Gene3D" id="1.20.1090.10">
    <property type="entry name" value="Dehydroquinate synthase-like - alpha domain"/>
    <property type="match status" value="1"/>
</dbReference>
<dbReference type="HAMAP" id="MF_00110">
    <property type="entry name" value="DHQ_synthase"/>
    <property type="match status" value="1"/>
</dbReference>
<dbReference type="InterPro" id="IPR050071">
    <property type="entry name" value="Dehydroquinate_synthase"/>
</dbReference>
<dbReference type="InterPro" id="IPR016037">
    <property type="entry name" value="DHQ_synth_AroB"/>
</dbReference>
<dbReference type="InterPro" id="IPR030963">
    <property type="entry name" value="DHQ_synth_fam"/>
</dbReference>
<dbReference type="InterPro" id="IPR030960">
    <property type="entry name" value="DHQS/DOIS_N"/>
</dbReference>
<dbReference type="InterPro" id="IPR056179">
    <property type="entry name" value="DHQS_C"/>
</dbReference>
<dbReference type="NCBIfam" id="TIGR01357">
    <property type="entry name" value="aroB"/>
    <property type="match status" value="1"/>
</dbReference>
<dbReference type="PANTHER" id="PTHR43622">
    <property type="entry name" value="3-DEHYDROQUINATE SYNTHASE"/>
    <property type="match status" value="1"/>
</dbReference>
<dbReference type="PANTHER" id="PTHR43622:SF7">
    <property type="entry name" value="3-DEHYDROQUINATE SYNTHASE, CHLOROPLASTIC"/>
    <property type="match status" value="1"/>
</dbReference>
<dbReference type="Pfam" id="PF01761">
    <property type="entry name" value="DHQ_synthase"/>
    <property type="match status" value="1"/>
</dbReference>
<dbReference type="Pfam" id="PF24621">
    <property type="entry name" value="DHQS_C"/>
    <property type="match status" value="1"/>
</dbReference>
<dbReference type="PIRSF" id="PIRSF001455">
    <property type="entry name" value="DHQ_synth"/>
    <property type="match status" value="1"/>
</dbReference>
<dbReference type="SUPFAM" id="SSF56796">
    <property type="entry name" value="Dehydroquinate synthase-like"/>
    <property type="match status" value="1"/>
</dbReference>
<sequence length="378" mass="40134">MSADQPVTVEVGLGDRAYDILIGSGLLSRAGEEISRRLPGTRAAVVTDENVAAAHLDTLKAGLEKGGIQPTVITMPPGEKTKSFAHLEEVVDGILAARLERGDVVIALGGGVIGDLTGFSAGIVRRGMNFVQVPTSLLAQVDSSVGGKTGINSPRGKNLVGVFLQPKLVLADTEVLDTLPIREFRAGYAELAKYGLIDRPELFAWLEANWQKVFAGGPERAQAIAEACRAKADVVARDEFETGDRALLNLGHTFGHALEAATQYDGARLVHGEGVAIGMALAHRFSSRLNLASPDDAARVETHLRAVGLPWRMADIPGELPDAEALLAFITQDKKVSRGALTFILTRGIGQAFIAKDVPASEVLSFLRENHPTSRKAG</sequence>
<name>AROB_RHILO</name>
<protein>
    <recommendedName>
        <fullName evidence="1">3-dehydroquinate synthase</fullName>
        <shortName evidence="1">DHQS</shortName>
        <ecNumber evidence="1">4.2.3.4</ecNumber>
    </recommendedName>
</protein>
<gene>
    <name evidence="1" type="primary">aroB</name>
    <name type="ordered locus">mll3571</name>
</gene>
<proteinExistence type="inferred from homology"/>
<organism>
    <name type="scientific">Mesorhizobium japonicum (strain LMG 29417 / CECT 9101 / MAFF 303099)</name>
    <name type="common">Mesorhizobium loti (strain MAFF 303099)</name>
    <dbReference type="NCBI Taxonomy" id="266835"/>
    <lineage>
        <taxon>Bacteria</taxon>
        <taxon>Pseudomonadati</taxon>
        <taxon>Pseudomonadota</taxon>
        <taxon>Alphaproteobacteria</taxon>
        <taxon>Hyphomicrobiales</taxon>
        <taxon>Phyllobacteriaceae</taxon>
        <taxon>Mesorhizobium</taxon>
    </lineage>
</organism>
<comment type="function">
    <text evidence="1">Catalyzes the conversion of 3-deoxy-D-arabino-heptulosonate 7-phosphate (DAHP) to dehydroquinate (DHQ).</text>
</comment>
<comment type="catalytic activity">
    <reaction evidence="1">
        <text>7-phospho-2-dehydro-3-deoxy-D-arabino-heptonate = 3-dehydroquinate + phosphate</text>
        <dbReference type="Rhea" id="RHEA:21968"/>
        <dbReference type="ChEBI" id="CHEBI:32364"/>
        <dbReference type="ChEBI" id="CHEBI:43474"/>
        <dbReference type="ChEBI" id="CHEBI:58394"/>
        <dbReference type="EC" id="4.2.3.4"/>
    </reaction>
</comment>
<comment type="cofactor">
    <cofactor evidence="1">
        <name>NAD(+)</name>
        <dbReference type="ChEBI" id="CHEBI:57540"/>
    </cofactor>
</comment>
<comment type="cofactor">
    <cofactor evidence="1">
        <name>Co(2+)</name>
        <dbReference type="ChEBI" id="CHEBI:48828"/>
    </cofactor>
    <cofactor evidence="1">
        <name>Zn(2+)</name>
        <dbReference type="ChEBI" id="CHEBI:29105"/>
    </cofactor>
    <text evidence="1">Binds 1 divalent metal cation per subunit. Can use either Co(2+) or Zn(2+).</text>
</comment>
<comment type="pathway">
    <text evidence="1">Metabolic intermediate biosynthesis; chorismate biosynthesis; chorismate from D-erythrose 4-phosphate and phosphoenolpyruvate: step 2/7.</text>
</comment>
<comment type="subcellular location">
    <subcellularLocation>
        <location evidence="1">Cytoplasm</location>
    </subcellularLocation>
</comment>
<comment type="similarity">
    <text evidence="1">Belongs to the sugar phosphate cyclases superfamily. Dehydroquinate synthase family.</text>
</comment>
<evidence type="ECO:0000255" key="1">
    <source>
        <dbReference type="HAMAP-Rule" id="MF_00110"/>
    </source>
</evidence>
<reference key="1">
    <citation type="journal article" date="2000" name="DNA Res.">
        <title>Complete genome structure of the nitrogen-fixing symbiotic bacterium Mesorhizobium loti.</title>
        <authorList>
            <person name="Kaneko T."/>
            <person name="Nakamura Y."/>
            <person name="Sato S."/>
            <person name="Asamizu E."/>
            <person name="Kato T."/>
            <person name="Sasamoto S."/>
            <person name="Watanabe A."/>
            <person name="Idesawa K."/>
            <person name="Ishikawa A."/>
            <person name="Kawashima K."/>
            <person name="Kimura T."/>
            <person name="Kishida Y."/>
            <person name="Kiyokawa C."/>
            <person name="Kohara M."/>
            <person name="Matsumoto M."/>
            <person name="Matsuno A."/>
            <person name="Mochizuki Y."/>
            <person name="Nakayama S."/>
            <person name="Nakazaki N."/>
            <person name="Shimpo S."/>
            <person name="Sugimoto M."/>
            <person name="Takeuchi C."/>
            <person name="Yamada M."/>
            <person name="Tabata S."/>
        </authorList>
    </citation>
    <scope>NUCLEOTIDE SEQUENCE [LARGE SCALE GENOMIC DNA]</scope>
    <source>
        <strain>LMG 29417 / CECT 9101 / MAFF 303099</strain>
    </source>
</reference>
<accession>Q98FY1</accession>
<keyword id="KW-0028">Amino-acid biosynthesis</keyword>
<keyword id="KW-0057">Aromatic amino acid biosynthesis</keyword>
<keyword id="KW-0170">Cobalt</keyword>
<keyword id="KW-0963">Cytoplasm</keyword>
<keyword id="KW-0456">Lyase</keyword>
<keyword id="KW-0479">Metal-binding</keyword>
<keyword id="KW-0520">NAD</keyword>
<keyword id="KW-0547">Nucleotide-binding</keyword>
<keyword id="KW-0862">Zinc</keyword>
<feature type="chain" id="PRO_0000140772" description="3-dehydroquinate synthase">
    <location>
        <begin position="1"/>
        <end position="378"/>
    </location>
</feature>
<feature type="binding site" evidence="1">
    <location>
        <begin position="111"/>
        <end position="115"/>
    </location>
    <ligand>
        <name>NAD(+)</name>
        <dbReference type="ChEBI" id="CHEBI:57540"/>
    </ligand>
</feature>
<feature type="binding site" evidence="1">
    <location>
        <begin position="135"/>
        <end position="136"/>
    </location>
    <ligand>
        <name>NAD(+)</name>
        <dbReference type="ChEBI" id="CHEBI:57540"/>
    </ligand>
</feature>
<feature type="binding site" evidence="1">
    <location>
        <position position="148"/>
    </location>
    <ligand>
        <name>NAD(+)</name>
        <dbReference type="ChEBI" id="CHEBI:57540"/>
    </ligand>
</feature>
<feature type="binding site" evidence="1">
    <location>
        <position position="157"/>
    </location>
    <ligand>
        <name>NAD(+)</name>
        <dbReference type="ChEBI" id="CHEBI:57540"/>
    </ligand>
</feature>
<feature type="binding site" evidence="1">
    <location>
        <position position="190"/>
    </location>
    <ligand>
        <name>Zn(2+)</name>
        <dbReference type="ChEBI" id="CHEBI:29105"/>
    </ligand>
</feature>
<feature type="binding site" evidence="1">
    <location>
        <position position="252"/>
    </location>
    <ligand>
        <name>Zn(2+)</name>
        <dbReference type="ChEBI" id="CHEBI:29105"/>
    </ligand>
</feature>
<feature type="binding site" evidence="1">
    <location>
        <position position="271"/>
    </location>
    <ligand>
        <name>Zn(2+)</name>
        <dbReference type="ChEBI" id="CHEBI:29105"/>
    </ligand>
</feature>